<keyword id="KW-0012">Acyltransferase</keyword>
<keyword id="KW-1185">Reference proteome</keyword>
<keyword id="KW-0808">Transferase</keyword>
<dbReference type="EC" id="2.3.1.-" evidence="4"/>
<dbReference type="EMBL" id="AM270194">
    <property type="protein sequence ID" value="CAK40118.1"/>
    <property type="molecule type" value="Genomic_DNA"/>
</dbReference>
<dbReference type="RefSeq" id="XP_001393495.1">
    <property type="nucleotide sequence ID" value="XM_001393458.1"/>
</dbReference>
<dbReference type="SMR" id="A2QTE3"/>
<dbReference type="EnsemblFungi" id="CAK40118">
    <property type="protein sequence ID" value="CAK40118"/>
    <property type="gene ID" value="An09g01800"/>
</dbReference>
<dbReference type="GeneID" id="4983711"/>
<dbReference type="KEGG" id="ang:An09g01800"/>
<dbReference type="VEuPathDB" id="FungiDB:An09g01800"/>
<dbReference type="HOGENOM" id="CLU_026450_5_0_1"/>
<dbReference type="Proteomes" id="UP000006706">
    <property type="component" value="Chromosome 1L"/>
</dbReference>
<dbReference type="GO" id="GO:0016746">
    <property type="term" value="F:acyltransferase activity"/>
    <property type="evidence" value="ECO:0007669"/>
    <property type="project" value="UniProtKB-KW"/>
</dbReference>
<dbReference type="Gene3D" id="3.30.559.10">
    <property type="entry name" value="Chloramphenicol acetyltransferase-like domain"/>
    <property type="match status" value="2"/>
</dbReference>
<dbReference type="InterPro" id="IPR023213">
    <property type="entry name" value="CAT-like_dom_sf"/>
</dbReference>
<dbReference type="InterPro" id="IPR051283">
    <property type="entry name" value="Sec_Metabolite_Acyltrans"/>
</dbReference>
<dbReference type="InterPro" id="IPR054710">
    <property type="entry name" value="Tri101-like_N"/>
</dbReference>
<dbReference type="PANTHER" id="PTHR31896">
    <property type="entry name" value="FAMILY REGULATORY PROTEIN, PUTATIVE (AFU_ORTHOLOGUE AFUA_3G14730)-RELATED"/>
    <property type="match status" value="1"/>
</dbReference>
<dbReference type="PANTHER" id="PTHR31896:SF64">
    <property type="entry name" value="TRICHOTHECENE 3-O-ACETYLTRANSFERASE"/>
    <property type="match status" value="1"/>
</dbReference>
<dbReference type="Pfam" id="PF22664">
    <property type="entry name" value="TRI-like_N"/>
    <property type="match status" value="1"/>
</dbReference>
<organism>
    <name type="scientific">Aspergillus niger (strain ATCC MYA-4892 / CBS 513.88 / FGSC A1513)</name>
    <dbReference type="NCBI Taxonomy" id="425011"/>
    <lineage>
        <taxon>Eukaryota</taxon>
        <taxon>Fungi</taxon>
        <taxon>Dikarya</taxon>
        <taxon>Ascomycota</taxon>
        <taxon>Pezizomycotina</taxon>
        <taxon>Eurotiomycetes</taxon>
        <taxon>Eurotiomycetidae</taxon>
        <taxon>Eurotiales</taxon>
        <taxon>Aspergillaceae</taxon>
        <taxon>Aspergillus</taxon>
        <taxon>Aspergillus subgen. Circumdati</taxon>
    </lineage>
</organism>
<gene>
    <name evidence="2" type="primary">epaC</name>
    <name type="ORF">An09g01800</name>
</gene>
<name>EPAC_ASPNC</name>
<protein>
    <recommendedName>
        <fullName evidence="2">O-acetyltransferase epaC</fullName>
        <ecNumber evidence="4">2.3.1.-</ecNumber>
    </recommendedName>
    <alternativeName>
        <fullName evidence="2">Pestalamide A biosynthesis cluster protein C</fullName>
    </alternativeName>
</protein>
<accession>A2QTE3</accession>
<proteinExistence type="inferred from homology"/>
<sequence>MATNGFRPEYEDLGRYEDILGQLPMLQVYSHIMLPFAMPEGLSRDTIIADLEAAVRQIRAHVPWMAGKVVNVGKGPDNSGRYIVVPCPPPDPLIVVRDVTHAFPPYKEIQRLKAPNSMLDSRLLAPTNAFPQRFEDSEEDPFRVIRLQASFVDGGVFLDFVTQHNMTDAGGLFGFARLVAMAMRGEQFSESLLEQVNRDRRNIIPLLTPDEPMLDHSHHIRPPITDAQPVVRPDPARWHFLRFTAAKLAELKDLASQTMTPDPEVPYITTDDAVSAFCWKKYITVRHRRRNTPDARSRFSRAMDGRKVLGIPAEYMGDLVHNVTTWLTFRELVDLPLGEIARHMRRELNRANTAYHVRSFATFIAQEPDKSTIAYGGRFNPDTDVGSSSVLRVDLFPVFGKLGRPDFIRRPNFPGIPFPSLLYFFPQNPQGDCDSLTCLTDADMEALNQDSEWTSMVEYIG</sequence>
<feature type="chain" id="PRO_0000446156" description="O-acetyltransferase epaC">
    <location>
        <begin position="1"/>
        <end position="461"/>
    </location>
</feature>
<comment type="function">
    <text evidence="1 4">O-acetyltransferase; part of the gene cluster that mediates the biosynthesis of nigerpyrone and its derivatives carbonarone A and pestalamide A (PubMed:30384904). The biosynthesis pathway begins with the polyketide assembly by epaA to form phenylacetyl triketide precursor from successive condensation of two malonyl-CoA, presumably with one phenylacetyl-CoA starter unit produced by the phenylacetyl-CoA ligase epaB (PubMed:30384904). For the nigerpyrone biosynthesis, the reactive polyketide chain is released as an aldehyde through the R-domain. A nonenzymatic cyclization and dehydration may create nigerpyrone (PubMed:30384904). For the biosynthesis of carbonarone A and pestalamide A, an extra methyl group is added through the C-methyltransferase domain. Several further steps involving the dehydrogenase orf1, the cytochrome P450 monooxygenase orf2 and the FAD-dependent monooxygenase orf3 are required to form a carbonarone A precursor which is converted to carbonarone A via cyclization (PubMed:30384904). The O-acetyltransferase epaC could catalyze the transfer of 2-methylsuccinyl-CoA, a common intermediate in the ethylmalonyl-CoA pathway, to generate the final product pestalamide A (Probable).</text>
</comment>
<comment type="pathway">
    <text evidence="4">Secondary metabolite biosynthesis.</text>
</comment>
<comment type="similarity">
    <text evidence="3">Belongs to the trichothecene 3-O-acetyltransferase family.</text>
</comment>
<reference key="1">
    <citation type="journal article" date="2007" name="Nat. Biotechnol.">
        <title>Genome sequencing and analysis of the versatile cell factory Aspergillus niger CBS 513.88.</title>
        <authorList>
            <person name="Pel H.J."/>
            <person name="de Winde J.H."/>
            <person name="Archer D.B."/>
            <person name="Dyer P.S."/>
            <person name="Hofmann G."/>
            <person name="Schaap P.J."/>
            <person name="Turner G."/>
            <person name="de Vries R.P."/>
            <person name="Albang R."/>
            <person name="Albermann K."/>
            <person name="Andersen M.R."/>
            <person name="Bendtsen J.D."/>
            <person name="Benen J.A.E."/>
            <person name="van den Berg M."/>
            <person name="Breestraat S."/>
            <person name="Caddick M.X."/>
            <person name="Contreras R."/>
            <person name="Cornell M."/>
            <person name="Coutinho P.M."/>
            <person name="Danchin E.G.J."/>
            <person name="Debets A.J.M."/>
            <person name="Dekker P."/>
            <person name="van Dijck P.W.M."/>
            <person name="van Dijk A."/>
            <person name="Dijkhuizen L."/>
            <person name="Driessen A.J.M."/>
            <person name="d'Enfert C."/>
            <person name="Geysens S."/>
            <person name="Goosen C."/>
            <person name="Groot G.S.P."/>
            <person name="de Groot P.W.J."/>
            <person name="Guillemette T."/>
            <person name="Henrissat B."/>
            <person name="Herweijer M."/>
            <person name="van den Hombergh J.P.T.W."/>
            <person name="van den Hondel C.A.M.J.J."/>
            <person name="van der Heijden R.T.J.M."/>
            <person name="van der Kaaij R.M."/>
            <person name="Klis F.M."/>
            <person name="Kools H.J."/>
            <person name="Kubicek C.P."/>
            <person name="van Kuyk P.A."/>
            <person name="Lauber J."/>
            <person name="Lu X."/>
            <person name="van der Maarel M.J.E.C."/>
            <person name="Meulenberg R."/>
            <person name="Menke H."/>
            <person name="Mortimer M.A."/>
            <person name="Nielsen J."/>
            <person name="Oliver S.G."/>
            <person name="Olsthoorn M."/>
            <person name="Pal K."/>
            <person name="van Peij N.N.M.E."/>
            <person name="Ram A.F.J."/>
            <person name="Rinas U."/>
            <person name="Roubos J.A."/>
            <person name="Sagt C.M.J."/>
            <person name="Schmoll M."/>
            <person name="Sun J."/>
            <person name="Ussery D."/>
            <person name="Varga J."/>
            <person name="Vervecken W."/>
            <person name="van de Vondervoort P.J.J."/>
            <person name="Wedler H."/>
            <person name="Woesten H.A.B."/>
            <person name="Zeng A.-P."/>
            <person name="van Ooyen A.J.J."/>
            <person name="Visser J."/>
            <person name="Stam H."/>
        </authorList>
    </citation>
    <scope>NUCLEOTIDE SEQUENCE [LARGE SCALE GENOMIC DNA]</scope>
    <source>
        <strain>ATCC MYA-4892 / CBS 513.88 / FGSC A1513</strain>
    </source>
</reference>
<reference key="2">
    <citation type="journal article" date="2018" name="Microbiol. Res.">
        <title>Deletion of the epigenetic regulator GcnE in Aspergillus niger FGSC A1279 activates the production of multiple polyketide metabolites.</title>
        <authorList>
            <person name="Wang B."/>
            <person name="Li X."/>
            <person name="Yu D."/>
            <person name="Chen X."/>
            <person name="Tabudravu J."/>
            <person name="Deng H."/>
            <person name="Pan L."/>
        </authorList>
    </citation>
    <scope>IDENTIFICATION</scope>
    <scope>FUNCTION</scope>
    <scope>PATHWAY</scope>
</reference>
<evidence type="ECO:0000269" key="1">
    <source>
    </source>
</evidence>
<evidence type="ECO:0000303" key="2">
    <source>
    </source>
</evidence>
<evidence type="ECO:0000305" key="3"/>
<evidence type="ECO:0000305" key="4">
    <source>
    </source>
</evidence>